<dbReference type="EC" id="3.1.26.11" evidence="1"/>
<dbReference type="EMBL" id="CP001186">
    <property type="protein sequence ID" value="ACK95985.1"/>
    <property type="molecule type" value="Genomic_DNA"/>
</dbReference>
<dbReference type="RefSeq" id="WP_000397454.1">
    <property type="nucleotide sequence ID" value="NC_011772.1"/>
</dbReference>
<dbReference type="SMR" id="B7IWQ5"/>
<dbReference type="GeneID" id="72450823"/>
<dbReference type="KEGG" id="bcg:BCG9842_B0985"/>
<dbReference type="HOGENOM" id="CLU_031317_2_0_9"/>
<dbReference type="Proteomes" id="UP000006744">
    <property type="component" value="Chromosome"/>
</dbReference>
<dbReference type="GO" id="GO:0042781">
    <property type="term" value="F:3'-tRNA processing endoribonuclease activity"/>
    <property type="evidence" value="ECO:0007669"/>
    <property type="project" value="UniProtKB-UniRule"/>
</dbReference>
<dbReference type="GO" id="GO:0008270">
    <property type="term" value="F:zinc ion binding"/>
    <property type="evidence" value="ECO:0007669"/>
    <property type="project" value="UniProtKB-UniRule"/>
</dbReference>
<dbReference type="CDD" id="cd07717">
    <property type="entry name" value="RNaseZ_ZiPD-like_MBL-fold"/>
    <property type="match status" value="1"/>
</dbReference>
<dbReference type="FunFam" id="3.60.15.10:FF:000002">
    <property type="entry name" value="Ribonuclease Z"/>
    <property type="match status" value="1"/>
</dbReference>
<dbReference type="Gene3D" id="3.60.15.10">
    <property type="entry name" value="Ribonuclease Z/Hydroxyacylglutathione hydrolase-like"/>
    <property type="match status" value="1"/>
</dbReference>
<dbReference type="HAMAP" id="MF_01818">
    <property type="entry name" value="RNase_Z_BN"/>
    <property type="match status" value="1"/>
</dbReference>
<dbReference type="InterPro" id="IPR001279">
    <property type="entry name" value="Metallo-B-lactamas"/>
</dbReference>
<dbReference type="InterPro" id="IPR036866">
    <property type="entry name" value="RibonucZ/Hydroxyglut_hydro"/>
</dbReference>
<dbReference type="InterPro" id="IPR013471">
    <property type="entry name" value="RNase_Z/BN"/>
</dbReference>
<dbReference type="NCBIfam" id="NF000800">
    <property type="entry name" value="PRK00055.1-1"/>
    <property type="match status" value="1"/>
</dbReference>
<dbReference type="NCBIfam" id="NF000801">
    <property type="entry name" value="PRK00055.1-3"/>
    <property type="match status" value="1"/>
</dbReference>
<dbReference type="NCBIfam" id="TIGR02651">
    <property type="entry name" value="RNase_Z"/>
    <property type="match status" value="1"/>
</dbReference>
<dbReference type="PANTHER" id="PTHR46018">
    <property type="entry name" value="ZINC PHOSPHODIESTERASE ELAC PROTEIN 1"/>
    <property type="match status" value="1"/>
</dbReference>
<dbReference type="PANTHER" id="PTHR46018:SF2">
    <property type="entry name" value="ZINC PHOSPHODIESTERASE ELAC PROTEIN 1"/>
    <property type="match status" value="1"/>
</dbReference>
<dbReference type="Pfam" id="PF00753">
    <property type="entry name" value="Lactamase_B"/>
    <property type="match status" value="1"/>
</dbReference>
<dbReference type="Pfam" id="PF12706">
    <property type="entry name" value="Lactamase_B_2"/>
    <property type="match status" value="1"/>
</dbReference>
<dbReference type="SMART" id="SM00849">
    <property type="entry name" value="Lactamase_B"/>
    <property type="match status" value="1"/>
</dbReference>
<dbReference type="SUPFAM" id="SSF56281">
    <property type="entry name" value="Metallo-hydrolase/oxidoreductase"/>
    <property type="match status" value="1"/>
</dbReference>
<sequence>MEFVFLGTGAGVPSKGRNVSAIALQLLEERGQTWLFDCGEATQHQILHTSVRPRRIEKIFITHLHGDHIFGLPGLLGSRSFQGGTTPLTVYGPKGIKQFIEVALSVSTTHVKYPLEVVEITEEGTVFEDNEFYVETKRLSHGIECFGYRIVEKDIQGALLVDKLLEMGVKPGPIFKRLKDGEVVELEDGTILNGNEFIGPPQKGRIITILGDTRYCEASRELAQDADVLVHEATFAAEDEQQAHDYFHSTSKQAASIALQANAKRLILTHISSRYQGDTYKELLKEARELFSNTEIATDLKSFPVEK</sequence>
<proteinExistence type="inferred from homology"/>
<reference key="1">
    <citation type="submission" date="2008-10" db="EMBL/GenBank/DDBJ databases">
        <title>Genome sequence of Bacillus cereus G9842.</title>
        <authorList>
            <person name="Dodson R.J."/>
            <person name="Durkin A.S."/>
            <person name="Rosovitz M.J."/>
            <person name="Rasko D.A."/>
            <person name="Hoffmaster A."/>
            <person name="Ravel J."/>
            <person name="Sutton G."/>
        </authorList>
    </citation>
    <scope>NUCLEOTIDE SEQUENCE [LARGE SCALE GENOMIC DNA]</scope>
    <source>
        <strain>G9842</strain>
    </source>
</reference>
<gene>
    <name evidence="1" type="primary">rnz</name>
    <name type="ordered locus">BCG9842_B0985</name>
</gene>
<keyword id="KW-0255">Endonuclease</keyword>
<keyword id="KW-0378">Hydrolase</keyword>
<keyword id="KW-0479">Metal-binding</keyword>
<keyword id="KW-0540">Nuclease</keyword>
<keyword id="KW-0819">tRNA processing</keyword>
<keyword id="KW-0862">Zinc</keyword>
<organism>
    <name type="scientific">Bacillus cereus (strain G9842)</name>
    <dbReference type="NCBI Taxonomy" id="405531"/>
    <lineage>
        <taxon>Bacteria</taxon>
        <taxon>Bacillati</taxon>
        <taxon>Bacillota</taxon>
        <taxon>Bacilli</taxon>
        <taxon>Bacillales</taxon>
        <taxon>Bacillaceae</taxon>
        <taxon>Bacillus</taxon>
        <taxon>Bacillus cereus group</taxon>
    </lineage>
</organism>
<evidence type="ECO:0000255" key="1">
    <source>
        <dbReference type="HAMAP-Rule" id="MF_01818"/>
    </source>
</evidence>
<accession>B7IWQ5</accession>
<protein>
    <recommendedName>
        <fullName evidence="1">Ribonuclease Z</fullName>
        <shortName evidence="1">RNase Z</shortName>
        <ecNumber evidence="1">3.1.26.11</ecNumber>
    </recommendedName>
    <alternativeName>
        <fullName evidence="1">tRNA 3 endonuclease</fullName>
    </alternativeName>
    <alternativeName>
        <fullName evidence="1">tRNase Z</fullName>
    </alternativeName>
</protein>
<name>RNZ_BACC2</name>
<comment type="function">
    <text evidence="1">Zinc phosphodiesterase, which displays some tRNA 3'-processing endonuclease activity. Probably involved in tRNA maturation, by removing a 3'-trailer from precursor tRNA.</text>
</comment>
<comment type="catalytic activity">
    <reaction evidence="1">
        <text>Endonucleolytic cleavage of RNA, removing extra 3' nucleotides from tRNA precursor, generating 3' termini of tRNAs. A 3'-hydroxy group is left at the tRNA terminus and a 5'-phosphoryl group is left at the trailer molecule.</text>
        <dbReference type="EC" id="3.1.26.11"/>
    </reaction>
</comment>
<comment type="cofactor">
    <cofactor evidence="1">
        <name>Zn(2+)</name>
        <dbReference type="ChEBI" id="CHEBI:29105"/>
    </cofactor>
    <text evidence="1">Binds 2 Zn(2+) ions.</text>
</comment>
<comment type="subunit">
    <text evidence="1">Homodimer.</text>
</comment>
<comment type="similarity">
    <text evidence="1">Belongs to the RNase Z family.</text>
</comment>
<feature type="chain" id="PRO_1000187931" description="Ribonuclease Z">
    <location>
        <begin position="1"/>
        <end position="307"/>
    </location>
</feature>
<feature type="active site" description="Proton acceptor" evidence="1">
    <location>
        <position position="67"/>
    </location>
</feature>
<feature type="binding site" evidence="1">
    <location>
        <position position="63"/>
    </location>
    <ligand>
        <name>Zn(2+)</name>
        <dbReference type="ChEBI" id="CHEBI:29105"/>
        <label>1</label>
        <note>catalytic</note>
    </ligand>
</feature>
<feature type="binding site" evidence="1">
    <location>
        <position position="65"/>
    </location>
    <ligand>
        <name>Zn(2+)</name>
        <dbReference type="ChEBI" id="CHEBI:29105"/>
        <label>1</label>
        <note>catalytic</note>
    </ligand>
</feature>
<feature type="binding site" evidence="1">
    <location>
        <position position="67"/>
    </location>
    <ligand>
        <name>Zn(2+)</name>
        <dbReference type="ChEBI" id="CHEBI:29105"/>
        <label>2</label>
        <note>catalytic</note>
    </ligand>
</feature>
<feature type="binding site" evidence="1">
    <location>
        <position position="68"/>
    </location>
    <ligand>
        <name>Zn(2+)</name>
        <dbReference type="ChEBI" id="CHEBI:29105"/>
        <label>2</label>
        <note>catalytic</note>
    </ligand>
</feature>
<feature type="binding site" evidence="1">
    <location>
        <position position="141"/>
    </location>
    <ligand>
        <name>Zn(2+)</name>
        <dbReference type="ChEBI" id="CHEBI:29105"/>
        <label>1</label>
        <note>catalytic</note>
    </ligand>
</feature>
<feature type="binding site" evidence="1">
    <location>
        <position position="212"/>
    </location>
    <ligand>
        <name>Zn(2+)</name>
        <dbReference type="ChEBI" id="CHEBI:29105"/>
        <label>1</label>
        <note>catalytic</note>
    </ligand>
</feature>
<feature type="binding site" evidence="1">
    <location>
        <position position="212"/>
    </location>
    <ligand>
        <name>Zn(2+)</name>
        <dbReference type="ChEBI" id="CHEBI:29105"/>
        <label>2</label>
        <note>catalytic</note>
    </ligand>
</feature>
<feature type="binding site" evidence="1">
    <location>
        <position position="270"/>
    </location>
    <ligand>
        <name>Zn(2+)</name>
        <dbReference type="ChEBI" id="CHEBI:29105"/>
        <label>2</label>
        <note>catalytic</note>
    </ligand>
</feature>